<sequence length="368" mass="41162">MEEDRVLSSVHSTVFKESESLEGKCDKIEGYDFNQGVNYPKLLRSMLTTGFQASNLGDVIDVVNQMLEWRLSDETIAPEDCSEEEKDPAYRESVKCKIFLGFTSNLVSSGVRETIRYLVQHHMVDVIVTTTGGVEEDLIKCLAPTFKGDFSLPGAYLRSKGLNRIGNLLVPNDNYCKFEDWIIPIFDQMLKEQKEESVLWTPSKLLARLGKEINNESSYLYWAYKMNIPVFCRGLTDGSLGDMLYFHSFRTSGLVIDVVQDIRAMNGEAVHATPRKTGMIILGGGLPKHHICNANMMRNGADYAVFINTGQEFDGSDSGARPDEAVSWGKIRGSAKTVKVYCDATIAFPLLVAETFASKREQSCEHKT</sequence>
<proteinExistence type="evidence at transcript level"/>
<gene>
    <name type="primary">DHS</name>
</gene>
<dbReference type="EC" id="2.5.1.46"/>
<dbReference type="EMBL" id="AY496434">
    <property type="protein sequence ID" value="AAR91928.1"/>
    <property type="molecule type" value="mRNA"/>
</dbReference>
<dbReference type="SMR" id="Q6RJS2"/>
<dbReference type="UniPathway" id="UPA00354"/>
<dbReference type="GO" id="GO:0034038">
    <property type="term" value="F:deoxyhypusine synthase activity"/>
    <property type="evidence" value="ECO:0007669"/>
    <property type="project" value="UniProtKB-EC"/>
</dbReference>
<dbReference type="FunFam" id="3.40.910.10:FF:000002">
    <property type="entry name" value="Deoxyhypusine synthase"/>
    <property type="match status" value="1"/>
</dbReference>
<dbReference type="Gene3D" id="3.40.910.10">
    <property type="entry name" value="Deoxyhypusine synthase"/>
    <property type="match status" value="1"/>
</dbReference>
<dbReference type="InterPro" id="IPR002773">
    <property type="entry name" value="Deoxyhypusine_synthase"/>
</dbReference>
<dbReference type="InterPro" id="IPR036982">
    <property type="entry name" value="Deoxyhypusine_synthase_sf"/>
</dbReference>
<dbReference type="InterPro" id="IPR029035">
    <property type="entry name" value="DHS-like_NAD/FAD-binding_dom"/>
</dbReference>
<dbReference type="NCBIfam" id="TIGR00321">
    <property type="entry name" value="dhys"/>
    <property type="match status" value="1"/>
</dbReference>
<dbReference type="PANTHER" id="PTHR11703">
    <property type="entry name" value="DEOXYHYPUSINE SYNTHASE"/>
    <property type="match status" value="1"/>
</dbReference>
<dbReference type="PANTHER" id="PTHR11703:SF0">
    <property type="entry name" value="DEOXYHYPUSINE SYNTHASE"/>
    <property type="match status" value="1"/>
</dbReference>
<dbReference type="Pfam" id="PF01916">
    <property type="entry name" value="DS"/>
    <property type="match status" value="1"/>
</dbReference>
<dbReference type="SUPFAM" id="SSF52467">
    <property type="entry name" value="DHS-like NAD/FAD-binding domain"/>
    <property type="match status" value="1"/>
</dbReference>
<comment type="function">
    <text evidence="1">Catalyzes the NAD-dependent oxidative cleavage of spermidine and the subsequent transfer of the butylamine moiety of spermidine to the epsilon-amino group of a specific lysine residue of the eIF-5A precursor protein to form the intermediate deoxyhypusine residue. Also able to produce homospermidine from putrescine (By similarity).</text>
</comment>
<comment type="catalytic activity">
    <reaction>
        <text>[eIF5A protein]-L-lysine + spermidine = [eIF5A protein]-deoxyhypusine + propane-1,3-diamine</text>
        <dbReference type="Rhea" id="RHEA:33299"/>
        <dbReference type="Rhea" id="RHEA-COMP:10143"/>
        <dbReference type="Rhea" id="RHEA-COMP:10144"/>
        <dbReference type="ChEBI" id="CHEBI:29969"/>
        <dbReference type="ChEBI" id="CHEBI:57484"/>
        <dbReference type="ChEBI" id="CHEBI:57834"/>
        <dbReference type="ChEBI" id="CHEBI:82657"/>
        <dbReference type="EC" id="2.5.1.46"/>
    </reaction>
</comment>
<comment type="cofactor">
    <cofactor evidence="1">
        <name>NAD(+)</name>
        <dbReference type="ChEBI" id="CHEBI:57540"/>
    </cofactor>
</comment>
<comment type="pathway">
    <text>Protein modification; eIF5A hypusination.</text>
</comment>
<comment type="similarity">
    <text evidence="2">Belongs to the deoxyhypusine synthase family.</text>
</comment>
<accession>Q6RJS2</accession>
<keyword id="KW-0386">Hypusine biosynthesis</keyword>
<keyword id="KW-0520">NAD</keyword>
<keyword id="KW-0808">Transferase</keyword>
<name>DHYS_BRANA</name>
<reference key="1">
    <citation type="submission" date="2003-12" db="EMBL/GenBank/DDBJ databases">
        <title>Suppression of deoxyhypusine synthase expression in canola using Agrobacterium tumefaciens-mediated transformation.</title>
        <authorList>
            <person name="Wang T.-W."/>
            <person name="Wu W."/>
            <person name="Zhang C.-G."/>
            <person name="Thompson J.E."/>
        </authorList>
    </citation>
    <scope>NUCLEOTIDE SEQUENCE [MRNA]</scope>
</reference>
<protein>
    <recommendedName>
        <fullName>Deoxyhypusine synthase</fullName>
        <ecNumber>2.5.1.46</ecNumber>
    </recommendedName>
</protein>
<organism>
    <name type="scientific">Brassica napus</name>
    <name type="common">Rape</name>
    <dbReference type="NCBI Taxonomy" id="3708"/>
    <lineage>
        <taxon>Eukaryota</taxon>
        <taxon>Viridiplantae</taxon>
        <taxon>Streptophyta</taxon>
        <taxon>Embryophyta</taxon>
        <taxon>Tracheophyta</taxon>
        <taxon>Spermatophyta</taxon>
        <taxon>Magnoliopsida</taxon>
        <taxon>eudicotyledons</taxon>
        <taxon>Gunneridae</taxon>
        <taxon>Pentapetalae</taxon>
        <taxon>rosids</taxon>
        <taxon>malvids</taxon>
        <taxon>Brassicales</taxon>
        <taxon>Brassicaceae</taxon>
        <taxon>Brassiceae</taxon>
        <taxon>Brassica</taxon>
    </lineage>
</organism>
<feature type="chain" id="PRO_0000134474" description="Deoxyhypusine synthase">
    <location>
        <begin position="1"/>
        <end position="368"/>
    </location>
</feature>
<feature type="active site" description="Nucleophile" evidence="1">
    <location>
        <position position="330"/>
    </location>
</feature>
<feature type="binding site" evidence="1">
    <location>
        <begin position="104"/>
        <end position="108"/>
    </location>
    <ligand>
        <name>NAD(+)</name>
        <dbReference type="ChEBI" id="CHEBI:57540"/>
    </ligand>
</feature>
<feature type="binding site" evidence="1">
    <location>
        <begin position="130"/>
        <end position="132"/>
    </location>
    <ligand>
        <name>NAD(+)</name>
        <dbReference type="ChEBI" id="CHEBI:57540"/>
    </ligand>
</feature>
<feature type="binding site" evidence="1">
    <location>
        <begin position="135"/>
        <end position="136"/>
    </location>
    <ligand>
        <name>spermidine</name>
        <dbReference type="ChEBI" id="CHEBI:57834"/>
    </ligand>
</feature>
<feature type="binding site" evidence="1">
    <location>
        <position position="136"/>
    </location>
    <ligand>
        <name>NAD(+)</name>
        <dbReference type="ChEBI" id="CHEBI:57540"/>
    </ligand>
</feature>
<feature type="binding site" evidence="1">
    <location>
        <position position="237"/>
    </location>
    <ligand>
        <name>NAD(+)</name>
        <dbReference type="ChEBI" id="CHEBI:57540"/>
    </ligand>
</feature>
<feature type="binding site" evidence="1">
    <location>
        <position position="242"/>
    </location>
    <ligand>
        <name>spermidine</name>
        <dbReference type="ChEBI" id="CHEBI:57834"/>
    </ligand>
</feature>
<feature type="binding site" evidence="1">
    <location>
        <position position="284"/>
    </location>
    <ligand>
        <name>NAD(+)</name>
        <dbReference type="ChEBI" id="CHEBI:57540"/>
    </ligand>
</feature>
<feature type="binding site" evidence="1">
    <location>
        <position position="289"/>
    </location>
    <ligand>
        <name>spermidine</name>
        <dbReference type="ChEBI" id="CHEBI:57834"/>
    </ligand>
</feature>
<feature type="binding site" evidence="1">
    <location>
        <begin position="309"/>
        <end position="310"/>
    </location>
    <ligand>
        <name>NAD(+)</name>
        <dbReference type="ChEBI" id="CHEBI:57540"/>
    </ligand>
</feature>
<feature type="binding site" evidence="1">
    <location>
        <begin position="315"/>
        <end position="317"/>
    </location>
    <ligand>
        <name>spermidine</name>
        <dbReference type="ChEBI" id="CHEBI:57834"/>
    </ligand>
</feature>
<feature type="binding site" evidence="1">
    <location>
        <begin position="324"/>
        <end position="330"/>
    </location>
    <ligand>
        <name>spermidine</name>
        <dbReference type="ChEBI" id="CHEBI:57834"/>
    </ligand>
</feature>
<feature type="binding site" evidence="1">
    <location>
        <begin position="343"/>
        <end position="344"/>
    </location>
    <ligand>
        <name>NAD(+)</name>
        <dbReference type="ChEBI" id="CHEBI:57540"/>
    </ligand>
</feature>
<evidence type="ECO:0000250" key="1"/>
<evidence type="ECO:0000305" key="2"/>